<reference key="1">
    <citation type="submission" date="2005-12" db="EMBL/GenBank/DDBJ databases">
        <authorList>
            <consortium name="NIH - Mammalian Gene Collection (MGC) project"/>
        </authorList>
    </citation>
    <scope>NUCLEOTIDE SEQUENCE [LARGE SCALE MRNA]</scope>
    <source>
        <strain>Crossbred X Angus</strain>
        <tissue>Liver</tissue>
    </source>
</reference>
<reference evidence="8" key="2">
    <citation type="journal article" date="2021" name="Cell">
        <title>De novo identification of mammalian ciliary motility proteins using cryo-EM.</title>
        <authorList>
            <person name="Gui M."/>
            <person name="Farley H."/>
            <person name="Anujan P."/>
            <person name="Anderson J.R."/>
            <person name="Maxwell D.W."/>
            <person name="Whitchurch J.B."/>
            <person name="Botsch J.J."/>
            <person name="Qiu T."/>
            <person name="Meleppattu S."/>
            <person name="Singh S.K."/>
            <person name="Zhang Q."/>
            <person name="Thompson J."/>
            <person name="Lucas J.S."/>
            <person name="Bingle C.D."/>
            <person name="Norris D.P."/>
            <person name="Roy S."/>
            <person name="Brown A."/>
        </authorList>
    </citation>
    <scope>STRUCTURE BY ELECTRON MICROSCOPY (3.40 ANGSTROMS)</scope>
    <scope>FUNCTION</scope>
    <scope>SUBCELLULAR LOCATION</scope>
    <scope>TISSUE SPECIFICITY</scope>
</reference>
<reference evidence="9" key="3">
    <citation type="journal article" date="2023" name="Cell">
        <title>Structural specializations of the sperm tail.</title>
        <authorList>
            <person name="Leung M.R."/>
            <person name="Zeng J."/>
            <person name="Wang X."/>
            <person name="Roelofs M.C."/>
            <person name="Huang W."/>
            <person name="Zenezini Chiozzi R."/>
            <person name="Hevler J.F."/>
            <person name="Heck A.J.R."/>
            <person name="Dutcher S.K."/>
            <person name="Brown A."/>
            <person name="Zhang R."/>
            <person name="Zeev-Ben-Mordehai T."/>
        </authorList>
    </citation>
    <scope>STRUCTURE BY ELECTRON MICROSCOPY (3.60 ANGSTROMS)</scope>
    <scope>SUBUNIT</scope>
    <scope>SUBCELLULAR LOCATION</scope>
</reference>
<proteinExistence type="evidence at protein level"/>
<comment type="function">
    <text evidence="2 5">Microtubule inner protein (MIP) part of the dynein-decorated doublet microtubules (DMTs) in cilia and flagellar axoneme. Forms filamentous polymers in the walls of ciliary and flagellar microtubules (PubMed:34715025). Contributes to normal sperm motility (By similarity).</text>
</comment>
<comment type="subunit">
    <text evidence="6">Microtubule inner protein component of sperm flagellar doublet microtubules.</text>
</comment>
<comment type="subcellular location">
    <subcellularLocation>
        <location evidence="5">Cytoplasm</location>
        <location evidence="5">Cytoskeleton</location>
        <location evidence="5">Cilium axoneme</location>
    </subcellularLocation>
    <subcellularLocation>
        <location evidence="6">Cytoplasm</location>
        <location evidence="6">Cytoskeleton</location>
        <location evidence="6">Flagellum axoneme</location>
    </subcellularLocation>
    <text evidence="6">Found in the abaxial (convex) surface of outer dense fibers in sperm flagella.</text>
</comment>
<comment type="tissue specificity">
    <text evidence="5">Expressed in trachea multiciliated cells.</text>
</comment>
<comment type="PTM">
    <text evidence="1">Ubiquitinated, leading to its degradation. Deubiquitinated by USP16, promoting its stability.</text>
</comment>
<comment type="similarity">
    <text evidence="7">Belongs to the tektin family.</text>
</comment>
<evidence type="ECO:0000250" key="1">
    <source>
        <dbReference type="UniProtKB" id="Q149S1"/>
    </source>
</evidence>
<evidence type="ECO:0000250" key="2">
    <source>
        <dbReference type="UniProtKB" id="Q6X6Z7"/>
    </source>
</evidence>
<evidence type="ECO:0000255" key="3"/>
<evidence type="ECO:0000256" key="4">
    <source>
        <dbReference type="SAM" id="MobiDB-lite"/>
    </source>
</evidence>
<evidence type="ECO:0000269" key="5">
    <source>
    </source>
</evidence>
<evidence type="ECO:0000269" key="6">
    <source>
    </source>
</evidence>
<evidence type="ECO:0000305" key="7"/>
<evidence type="ECO:0007744" key="8">
    <source>
        <dbReference type="PDB" id="7RRO"/>
    </source>
</evidence>
<evidence type="ECO:0007744" key="9">
    <source>
        <dbReference type="PDB" id="8OTZ"/>
    </source>
</evidence>
<accession>Q2TA38</accession>
<dbReference type="EMBL" id="BC111132">
    <property type="protein sequence ID" value="AAI11133.1"/>
    <property type="molecule type" value="mRNA"/>
</dbReference>
<dbReference type="RefSeq" id="NP_001033158.1">
    <property type="nucleotide sequence ID" value="NM_001038069.2"/>
</dbReference>
<dbReference type="PDB" id="7RRO">
    <property type="method" value="EM"/>
    <property type="resolution" value="3.40 A"/>
    <property type="chains" value="D0/D1/D2/D3/D5/D6/D7/D8/D9=1-447"/>
</dbReference>
<dbReference type="PDB" id="8OTZ">
    <property type="method" value="EM"/>
    <property type="resolution" value="3.60 A"/>
    <property type="chains" value="ES/ET/EU/EV/EW/EX/EY/EZ=1-447"/>
</dbReference>
<dbReference type="PDB" id="9CPB">
    <property type="method" value="EM"/>
    <property type="resolution" value="3.52 A"/>
    <property type="chains" value="6P/6Q/6R/6S/6T/6U/6V/6W=1-447"/>
</dbReference>
<dbReference type="PDBsum" id="7RRO"/>
<dbReference type="PDBsum" id="8OTZ"/>
<dbReference type="PDBsum" id="9CPB"/>
<dbReference type="EMDB" id="EMD-17187"/>
<dbReference type="EMDB" id="EMD-24664"/>
<dbReference type="EMDB" id="EMD-45801"/>
<dbReference type="EMDB" id="EMD-50664"/>
<dbReference type="SMR" id="Q2TA38"/>
<dbReference type="FunCoup" id="Q2TA38">
    <property type="interactions" value="121"/>
</dbReference>
<dbReference type="STRING" id="9913.ENSBTAP00000016726"/>
<dbReference type="PaxDb" id="9913-ENSBTAP00000016726"/>
<dbReference type="Ensembl" id="ENSBTAT00000016726.3">
    <property type="protein sequence ID" value="ENSBTAP00000016726.2"/>
    <property type="gene ID" value="ENSBTAG00000012601.4"/>
</dbReference>
<dbReference type="GeneID" id="510343"/>
<dbReference type="KEGG" id="bta:510343"/>
<dbReference type="CTD" id="150483"/>
<dbReference type="VEuPathDB" id="HostDB:ENSBTAG00000012601"/>
<dbReference type="VGNC" id="VGNC:99678">
    <property type="gene designation" value="TEKT4"/>
</dbReference>
<dbReference type="eggNOG" id="KOG2685">
    <property type="taxonomic scope" value="Eukaryota"/>
</dbReference>
<dbReference type="GeneTree" id="ENSGT00950000182894"/>
<dbReference type="HOGENOM" id="CLU_033588_2_1_1"/>
<dbReference type="InParanoid" id="Q2TA38"/>
<dbReference type="OMA" id="RNLEDTH"/>
<dbReference type="OrthoDB" id="5788000at2759"/>
<dbReference type="TreeFam" id="TF320754"/>
<dbReference type="Proteomes" id="UP000009136">
    <property type="component" value="Chromosome 25"/>
</dbReference>
<dbReference type="Bgee" id="ENSBTAG00000012601">
    <property type="expression patterns" value="Expressed in spermatid and 23 other cell types or tissues"/>
</dbReference>
<dbReference type="GO" id="GO:0160111">
    <property type="term" value="C:axonemal A tubule inner sheath"/>
    <property type="evidence" value="ECO:0000250"/>
    <property type="project" value="UniProtKB"/>
</dbReference>
<dbReference type="GO" id="GO:0005879">
    <property type="term" value="C:axonemal microtubule"/>
    <property type="evidence" value="ECO:0000314"/>
    <property type="project" value="UniProtKB"/>
</dbReference>
<dbReference type="GO" id="GO:0015630">
    <property type="term" value="C:microtubule cytoskeleton"/>
    <property type="evidence" value="ECO:0000318"/>
    <property type="project" value="GO_Central"/>
</dbReference>
<dbReference type="GO" id="GO:0036126">
    <property type="term" value="C:sperm flagellum"/>
    <property type="evidence" value="ECO:0000250"/>
    <property type="project" value="UniProtKB"/>
</dbReference>
<dbReference type="GO" id="GO:0097225">
    <property type="term" value="C:sperm midpiece"/>
    <property type="evidence" value="ECO:0007669"/>
    <property type="project" value="Ensembl"/>
</dbReference>
<dbReference type="GO" id="GO:0097228">
    <property type="term" value="C:sperm principal piece"/>
    <property type="evidence" value="ECO:0007669"/>
    <property type="project" value="Ensembl"/>
</dbReference>
<dbReference type="GO" id="GO:0060271">
    <property type="term" value="P:cilium assembly"/>
    <property type="evidence" value="ECO:0000318"/>
    <property type="project" value="GO_Central"/>
</dbReference>
<dbReference type="GO" id="GO:0060294">
    <property type="term" value="P:cilium movement involved in cell motility"/>
    <property type="evidence" value="ECO:0000318"/>
    <property type="project" value="GO_Central"/>
</dbReference>
<dbReference type="GO" id="GO:0030317">
    <property type="term" value="P:flagellated sperm motility"/>
    <property type="evidence" value="ECO:0000250"/>
    <property type="project" value="UniProtKB"/>
</dbReference>
<dbReference type="GO" id="GO:0060378">
    <property type="term" value="P:regulation of brood size"/>
    <property type="evidence" value="ECO:0007669"/>
    <property type="project" value="Ensembl"/>
</dbReference>
<dbReference type="InterPro" id="IPR048256">
    <property type="entry name" value="Tektin-like"/>
</dbReference>
<dbReference type="InterPro" id="IPR000435">
    <property type="entry name" value="Tektins"/>
</dbReference>
<dbReference type="PANTHER" id="PTHR19960">
    <property type="entry name" value="TEKTIN"/>
    <property type="match status" value="1"/>
</dbReference>
<dbReference type="PANTHER" id="PTHR19960:SF12">
    <property type="entry name" value="TEKTIN-4"/>
    <property type="match status" value="1"/>
</dbReference>
<dbReference type="Pfam" id="PF03148">
    <property type="entry name" value="Tektin"/>
    <property type="match status" value="1"/>
</dbReference>
<dbReference type="PRINTS" id="PR00511">
    <property type="entry name" value="TEKTIN"/>
</dbReference>
<organism>
    <name type="scientific">Bos taurus</name>
    <name type="common">Bovine</name>
    <dbReference type="NCBI Taxonomy" id="9913"/>
    <lineage>
        <taxon>Eukaryota</taxon>
        <taxon>Metazoa</taxon>
        <taxon>Chordata</taxon>
        <taxon>Craniata</taxon>
        <taxon>Vertebrata</taxon>
        <taxon>Euteleostomi</taxon>
        <taxon>Mammalia</taxon>
        <taxon>Eutheria</taxon>
        <taxon>Laurasiatheria</taxon>
        <taxon>Artiodactyla</taxon>
        <taxon>Ruminantia</taxon>
        <taxon>Pecora</taxon>
        <taxon>Bovidae</taxon>
        <taxon>Bovinae</taxon>
        <taxon>Bos</taxon>
    </lineage>
</organism>
<name>TEKT4_BOVIN</name>
<gene>
    <name type="primary">TEKT4</name>
</gene>
<keyword id="KW-0002">3D-structure</keyword>
<keyword id="KW-0966">Cell projection</keyword>
<keyword id="KW-0969">Cilium</keyword>
<keyword id="KW-0970">Cilium biogenesis/degradation</keyword>
<keyword id="KW-0175">Coiled coil</keyword>
<keyword id="KW-0963">Cytoplasm</keyword>
<keyword id="KW-0206">Cytoskeleton</keyword>
<keyword id="KW-0282">Flagellum</keyword>
<keyword id="KW-1185">Reference proteome</keyword>
<keyword id="KW-0832">Ubl conjugation</keyword>
<feature type="chain" id="PRO_0000261174" description="Tektin-4">
    <location>
        <begin position="1"/>
        <end position="447"/>
    </location>
</feature>
<feature type="region of interest" description="Disordered" evidence="4">
    <location>
        <begin position="72"/>
        <end position="104"/>
    </location>
</feature>
<feature type="coiled-coil region" evidence="3">
    <location>
        <begin position="69"/>
        <end position="144"/>
    </location>
</feature>
<feature type="coiled-coil region" evidence="3">
    <location>
        <begin position="304"/>
        <end position="423"/>
    </location>
</feature>
<feature type="compositionally biased region" description="Basic and acidic residues" evidence="4">
    <location>
        <begin position="72"/>
        <end position="81"/>
    </location>
</feature>
<feature type="compositionally biased region" description="Low complexity" evidence="4">
    <location>
        <begin position="82"/>
        <end position="97"/>
    </location>
</feature>
<protein>
    <recommendedName>
        <fullName>Tektin-4</fullName>
    </recommendedName>
</protein>
<sequence>MAQTDILLTKEPAPQTVPACQLPRKLYDVARNTGAHTSSGLATSGFRTAKYLLDEWFQNCYARYHQAFADRDQSERQRHESQQLAAETEALAQRTQQDSTRKVGERLQDMHGWKSELQRQVEELVSETELLLAQKQRLERALDATAGPFSIVTDNLQCRERRQHPDLVRDCVEIELLKEAELIRNIQELLKRTIKQAVSQIRLNWEHKETCEMDWSDKVEAYNIDEACCRYNNQSTDVQFYPHSAKFEESASTPETWAKFTQEHLYRAERERLASVNLRNLIDCILQDTSEDLRLQCDAVNLAFGRRCEELEDARHKLEHHLRKTLREISDQEHNIAALKQAIKDKEAPLKVAQTRLYQRSHRPNVELCRDAAQFRLASEVEELNLSLAALKEKLLEAEQSLRNLEDTRMSLEKDIAIKTNSLFIDRHKCMAHRAHYPTVLQLAGYQ</sequence>